<dbReference type="EC" id="2.6.1.2" evidence="4"/>
<dbReference type="EMBL" id="AL123456">
    <property type="protein sequence ID" value="CCP43067.1"/>
    <property type="molecule type" value="Genomic_DNA"/>
</dbReference>
<dbReference type="PIR" id="H70506">
    <property type="entry name" value="H70506"/>
</dbReference>
<dbReference type="RefSeq" id="NP_214851.1">
    <property type="nucleotide sequence ID" value="NC_000962.3"/>
</dbReference>
<dbReference type="RefSeq" id="WP_003401733.1">
    <property type="nucleotide sequence ID" value="NZ_NVQJ01000081.1"/>
</dbReference>
<dbReference type="SMR" id="P9WQ91"/>
<dbReference type="FunCoup" id="P9WQ91">
    <property type="interactions" value="299"/>
</dbReference>
<dbReference type="STRING" id="83332.Rv0337c"/>
<dbReference type="PaxDb" id="83332-Rv0337c"/>
<dbReference type="DNASU" id="886522"/>
<dbReference type="GeneID" id="886522"/>
<dbReference type="KEGG" id="mtu:Rv0337c"/>
<dbReference type="KEGG" id="mtv:RVBD_0337c"/>
<dbReference type="TubercuList" id="Rv0337c"/>
<dbReference type="eggNOG" id="COG0436">
    <property type="taxonomic scope" value="Bacteria"/>
</dbReference>
<dbReference type="InParanoid" id="P9WQ91"/>
<dbReference type="OrthoDB" id="9763453at2"/>
<dbReference type="PhylomeDB" id="P9WQ91"/>
<dbReference type="Proteomes" id="UP000001584">
    <property type="component" value="Chromosome"/>
</dbReference>
<dbReference type="GO" id="GO:0005737">
    <property type="term" value="C:cytoplasm"/>
    <property type="evidence" value="ECO:0007669"/>
    <property type="project" value="UniProtKB-SubCell"/>
</dbReference>
<dbReference type="GO" id="GO:0005886">
    <property type="term" value="C:plasma membrane"/>
    <property type="evidence" value="ECO:0007005"/>
    <property type="project" value="MTBBASE"/>
</dbReference>
<dbReference type="GO" id="GO:0004021">
    <property type="term" value="F:L-alanine:2-oxoglutarate aminotransferase activity"/>
    <property type="evidence" value="ECO:0007669"/>
    <property type="project" value="UniProtKB-EC"/>
</dbReference>
<dbReference type="GO" id="GO:0030170">
    <property type="term" value="F:pyridoxal phosphate binding"/>
    <property type="evidence" value="ECO:0007669"/>
    <property type="project" value="InterPro"/>
</dbReference>
<dbReference type="GO" id="GO:0009058">
    <property type="term" value="P:biosynthetic process"/>
    <property type="evidence" value="ECO:0007669"/>
    <property type="project" value="InterPro"/>
</dbReference>
<dbReference type="CDD" id="cd00609">
    <property type="entry name" value="AAT_like"/>
    <property type="match status" value="1"/>
</dbReference>
<dbReference type="FunFam" id="3.40.640.10:FF:000019">
    <property type="entry name" value="Pyridoxal phosphate-dependent aminotransferase"/>
    <property type="match status" value="1"/>
</dbReference>
<dbReference type="Gene3D" id="3.90.1150.10">
    <property type="entry name" value="Aspartate Aminotransferase, domain 1"/>
    <property type="match status" value="1"/>
</dbReference>
<dbReference type="Gene3D" id="3.40.640.10">
    <property type="entry name" value="Type I PLP-dependent aspartate aminotransferase-like (Major domain)"/>
    <property type="match status" value="1"/>
</dbReference>
<dbReference type="InterPro" id="IPR051926">
    <property type="entry name" value="Ala_Aminotransferase"/>
</dbReference>
<dbReference type="InterPro" id="IPR004839">
    <property type="entry name" value="Aminotransferase_I/II_large"/>
</dbReference>
<dbReference type="InterPro" id="IPR015424">
    <property type="entry name" value="PyrdxlP-dep_Trfase"/>
</dbReference>
<dbReference type="InterPro" id="IPR015421">
    <property type="entry name" value="PyrdxlP-dep_Trfase_major"/>
</dbReference>
<dbReference type="InterPro" id="IPR015422">
    <property type="entry name" value="PyrdxlP-dep_Trfase_small"/>
</dbReference>
<dbReference type="PANTHER" id="PTHR43488">
    <property type="entry name" value="GLUTAMATE-PYRUVATE AMINOTRANSFERASE ALAA"/>
    <property type="match status" value="1"/>
</dbReference>
<dbReference type="PANTHER" id="PTHR43488:SF2">
    <property type="entry name" value="GLUTAMATE-PYRUVATE AMINOTRANSFERASE ALAA"/>
    <property type="match status" value="1"/>
</dbReference>
<dbReference type="Pfam" id="PF00155">
    <property type="entry name" value="Aminotran_1_2"/>
    <property type="match status" value="1"/>
</dbReference>
<dbReference type="SUPFAM" id="SSF53383">
    <property type="entry name" value="PLP-dependent transferases"/>
    <property type="match status" value="1"/>
</dbReference>
<name>ALAA_MYCTU</name>
<keyword id="KW-0032">Aminotransferase</keyword>
<keyword id="KW-0963">Cytoplasm</keyword>
<keyword id="KW-0663">Pyridoxal phosphate</keyword>
<keyword id="KW-1185">Reference proteome</keyword>
<keyword id="KW-0808">Transferase</keyword>
<accession>P9WQ91</accession>
<accession>L0T6D2</accession>
<accession>O33267</accession>
<accession>P63498</accession>
<reference key="1">
    <citation type="journal article" date="1998" name="Nature">
        <title>Deciphering the biology of Mycobacterium tuberculosis from the complete genome sequence.</title>
        <authorList>
            <person name="Cole S.T."/>
            <person name="Brosch R."/>
            <person name="Parkhill J."/>
            <person name="Garnier T."/>
            <person name="Churcher C.M."/>
            <person name="Harris D.E."/>
            <person name="Gordon S.V."/>
            <person name="Eiglmeier K."/>
            <person name="Gas S."/>
            <person name="Barry C.E. III"/>
            <person name="Tekaia F."/>
            <person name="Badcock K."/>
            <person name="Basham D."/>
            <person name="Brown D."/>
            <person name="Chillingworth T."/>
            <person name="Connor R."/>
            <person name="Davies R.M."/>
            <person name="Devlin K."/>
            <person name="Feltwell T."/>
            <person name="Gentles S."/>
            <person name="Hamlin N."/>
            <person name="Holroyd S."/>
            <person name="Hornsby T."/>
            <person name="Jagels K."/>
            <person name="Krogh A."/>
            <person name="McLean J."/>
            <person name="Moule S."/>
            <person name="Murphy L.D."/>
            <person name="Oliver S."/>
            <person name="Osborne J."/>
            <person name="Quail M.A."/>
            <person name="Rajandream M.A."/>
            <person name="Rogers J."/>
            <person name="Rutter S."/>
            <person name="Seeger K."/>
            <person name="Skelton S."/>
            <person name="Squares S."/>
            <person name="Squares R."/>
            <person name="Sulston J.E."/>
            <person name="Taylor K."/>
            <person name="Whitehead S."/>
            <person name="Barrell B.G."/>
        </authorList>
    </citation>
    <scope>NUCLEOTIDE SEQUENCE [LARGE SCALE GENOMIC DNA]</scope>
    <source>
        <strain>ATCC 25618 / H37Rv</strain>
    </source>
</reference>
<reference key="2">
    <citation type="journal article" date="2011" name="Mol. Cell. Proteomics">
        <title>Proteogenomic analysis of Mycobacterium tuberculosis by high resolution mass spectrometry.</title>
        <authorList>
            <person name="Kelkar D.S."/>
            <person name="Kumar D."/>
            <person name="Kumar P."/>
            <person name="Balakrishnan L."/>
            <person name="Muthusamy B."/>
            <person name="Yadav A.K."/>
            <person name="Shrivastava P."/>
            <person name="Marimuthu A."/>
            <person name="Anand S."/>
            <person name="Sundaram H."/>
            <person name="Kingsbury R."/>
            <person name="Harsha H.C."/>
            <person name="Nair B."/>
            <person name="Prasad T.S."/>
            <person name="Chauhan D.S."/>
            <person name="Katoch K."/>
            <person name="Katoch V.M."/>
            <person name="Kumar P."/>
            <person name="Chaerkady R."/>
            <person name="Ramachandran S."/>
            <person name="Dash D."/>
            <person name="Pandey A."/>
        </authorList>
    </citation>
    <scope>IDENTIFICATION BY MASS SPECTROMETRY [LARGE SCALE ANALYSIS]</scope>
    <source>
        <strain>ATCC 25618 / H37Rv</strain>
    </source>
</reference>
<reference key="3">
    <citation type="journal article" date="2020" name="Nat. Commun.">
        <title>Aspartate aminotransferase Rv3722c governs aspartate-dependent nitrogen metabolism in Mycobacterium tuberculosis.</title>
        <authorList>
            <person name="Jansen R.S."/>
            <person name="Mandyoli L."/>
            <person name="Hughes R."/>
            <person name="Wakabayashi S."/>
            <person name="Pinkham J.T."/>
            <person name="Selbach B."/>
            <person name="Guinn K.M."/>
            <person name="Rubin E.J."/>
            <person name="Sacchettini J.C."/>
            <person name="Rhee K.Y."/>
        </authorList>
    </citation>
    <scope>CATALYTIC ACTIVITY</scope>
    <source>
        <strain>H37Rv</strain>
    </source>
</reference>
<proteinExistence type="evidence at protein level"/>
<evidence type="ECO:0000250" key="1"/>
<evidence type="ECO:0000250" key="2">
    <source>
        <dbReference type="UniProtKB" id="P0A959"/>
    </source>
</evidence>
<evidence type="ECO:0000250" key="3">
    <source>
        <dbReference type="UniProtKB" id="Q56232"/>
    </source>
</evidence>
<evidence type="ECO:0000269" key="4">
    <source>
    </source>
</evidence>
<evidence type="ECO:0000303" key="5">
    <source>
    </source>
</evidence>
<evidence type="ECO:0000305" key="6"/>
<sequence>MDNDGTIVDVTTHQLPWHTASHQRQRAFAQSAKLQDVLYEIRGPVHQHAARLEAEGHRILKLNIGNPAPFGFEAPDVIMRDIIQALPYAQGYSDSQGILSARRAVVTRYELVPGFPRFDVDDVYLGNGVSELITMTLQALLDNGDQVLIPSPDYPLWTASTSLAGGTPVHYLCDETQGWQPDIADLESKITERTKALVVINPNNPTGAVYSCEILTQMVDLARKHQLLLLADEIYDKILYDDAKHISLASIAPDMLCLTFNGLSKAYRVAGYRAGWLAITGPKEHASSFIEGIGLLANMRLCPNVPAQHAIQVALGGHQSIEDLVLPGGRLLEQRDIAWTKLNEIPGVSCVKPAGALYAFPRLDPEVYDIDDDEQLVLDLLLSEKILVTQGTGFNWPAPDHLRLVTLPWSRDLAAAIERLGNFLVSYRQ</sequence>
<organism>
    <name type="scientific">Mycobacterium tuberculosis (strain ATCC 25618 / H37Rv)</name>
    <dbReference type="NCBI Taxonomy" id="83332"/>
    <lineage>
        <taxon>Bacteria</taxon>
        <taxon>Bacillati</taxon>
        <taxon>Actinomycetota</taxon>
        <taxon>Actinomycetes</taxon>
        <taxon>Mycobacteriales</taxon>
        <taxon>Mycobacteriaceae</taxon>
        <taxon>Mycobacterium</taxon>
        <taxon>Mycobacterium tuberculosis complex</taxon>
    </lineage>
</organism>
<gene>
    <name type="primary">aspC</name>
    <name type="ordered locus">Rv0337c</name>
    <name type="ORF">MTCY279.04c</name>
</gene>
<feature type="chain" id="PRO_0000123843" description="Alanine aminotransferase">
    <location>
        <begin position="1"/>
        <end position="429"/>
    </location>
</feature>
<feature type="binding site" evidence="2">
    <location>
        <position position="65"/>
    </location>
    <ligand>
        <name>L-alanine</name>
        <dbReference type="ChEBI" id="CHEBI:57972"/>
    </ligand>
</feature>
<feature type="binding site" evidence="2">
    <location>
        <position position="204"/>
    </location>
    <ligand>
        <name>L-alanine</name>
        <dbReference type="ChEBI" id="CHEBI:57972"/>
    </ligand>
</feature>
<feature type="binding site" evidence="2">
    <location>
        <position position="403"/>
    </location>
    <ligand>
        <name>L-alanine</name>
        <dbReference type="ChEBI" id="CHEBI:57972"/>
    </ligand>
</feature>
<feature type="modified residue" description="N6-(pyridoxal phosphate)lysine" evidence="3">
    <location>
        <position position="265"/>
    </location>
</feature>
<comment type="catalytic activity">
    <reaction evidence="4">
        <text>L-alanine + 2-oxoglutarate = pyruvate + L-glutamate</text>
        <dbReference type="Rhea" id="RHEA:19453"/>
        <dbReference type="ChEBI" id="CHEBI:15361"/>
        <dbReference type="ChEBI" id="CHEBI:16810"/>
        <dbReference type="ChEBI" id="CHEBI:29985"/>
        <dbReference type="ChEBI" id="CHEBI:57972"/>
        <dbReference type="EC" id="2.6.1.2"/>
    </reaction>
</comment>
<comment type="cofactor">
    <cofactor evidence="3">
        <name>pyridoxal 5'-phosphate</name>
        <dbReference type="ChEBI" id="CHEBI:597326"/>
    </cofactor>
</comment>
<comment type="subunit">
    <text evidence="1">Homodimer.</text>
</comment>
<comment type="subcellular location">
    <subcellularLocation>
        <location evidence="1">Cytoplasm</location>
    </subcellularLocation>
</comment>
<comment type="similarity">
    <text evidence="6">Belongs to the class-I pyridoxal-phosphate-dependent aminotransferase family.</text>
</comment>
<protein>
    <recommendedName>
        <fullName evidence="6">Alanine aminotransferase</fullName>
        <ecNumber evidence="4">2.6.1.2</ecNumber>
    </recommendedName>
    <alternativeName>
        <fullName evidence="5">Alanine transaminase</fullName>
    </alternativeName>
    <alternativeName>
        <fullName>Transaminase A</fullName>
    </alternativeName>
</protein>